<organism>
    <name type="scientific">Hepatitis B virus genotype B1 (isolate Japan/Yamagata-2/1998)</name>
    <name type="common">HBV-B</name>
    <dbReference type="NCBI Taxonomy" id="489464"/>
    <lineage>
        <taxon>Viruses</taxon>
        <taxon>Riboviria</taxon>
        <taxon>Pararnavirae</taxon>
        <taxon>Artverviricota</taxon>
        <taxon>Revtraviricetes</taxon>
        <taxon>Blubervirales</taxon>
        <taxon>Hepadnaviridae</taxon>
        <taxon>Orthohepadnavirus</taxon>
        <taxon>Hepatitis B virus</taxon>
    </lineage>
</organism>
<sequence length="154" mass="16662">MAARLCCQLDPARDVLCLRPVGAESRGRPLPGPLGAIPPASPSTVPTDHGAHLSLRGLPVCAFSSAGPCALRFTSARRMETTVNAHRNLPKVLHKRTLGLSVMSTTDLEAYFKDCVFTEWEELGEEMRLKVFVLGGCRHKLVCSPAPCNFFTSA</sequence>
<feature type="chain" id="PRO_0000319902" description="Protein X">
    <location>
        <begin position="1"/>
        <end position="154"/>
    </location>
</feature>
<feature type="region of interest" description="Mitochondrial targeting sequence" evidence="1">
    <location>
        <begin position="68"/>
        <end position="117"/>
    </location>
</feature>
<accession>Q9PX75</accession>
<protein>
    <recommendedName>
        <fullName evidence="1">Protein X</fullName>
    </recommendedName>
    <alternativeName>
        <fullName evidence="1">HBx</fullName>
    </alternativeName>
    <alternativeName>
        <fullName evidence="1">Peptide X</fullName>
    </alternativeName>
    <alternativeName>
        <fullName evidence="1">pX</fullName>
    </alternativeName>
</protein>
<keyword id="KW-1074">Activation of host NF-kappa-B by virus</keyword>
<keyword id="KW-0010">Activator</keyword>
<keyword id="KW-0053">Apoptosis</keyword>
<keyword id="KW-1035">Host cytoplasm</keyword>
<keyword id="KW-1079">Host G2/M cell cycle arrest by virus</keyword>
<keyword id="KW-1045">Host mitochondrion</keyword>
<keyword id="KW-1048">Host nucleus</keyword>
<keyword id="KW-0945">Host-virus interaction</keyword>
<keyword id="KW-1121">Modulation of host cell cycle by virus</keyword>
<keyword id="KW-0804">Transcription</keyword>
<keyword id="KW-0805">Transcription regulation</keyword>
<gene>
    <name evidence="1" type="primary">X</name>
</gene>
<reference key="1">
    <citation type="journal article" date="1999" name="Yamagata Med. J.">
        <title>Sequence analysis of the entire genome of hepatitis B virus from a patient with fulminant hepatitis.</title>
        <authorList>
            <person name="Koseki T."/>
            <person name="Hongo S."/>
            <person name="Muraki Y."/>
            <person name="Sugawara K."/>
            <person name="Matsuzaki Y."/>
            <person name="Nakamura K."/>
        </authorList>
    </citation>
    <scope>NUCLEOTIDE SEQUENCE [GENOMIC DNA]</scope>
</reference>
<reference key="2">
    <citation type="journal article" date="2004" name="J. Virol.">
        <title>The enigmatic X gene of hepatitis B virus.</title>
        <authorList>
            <person name="Bouchard M.J."/>
            <person name="Schneider R.J."/>
        </authorList>
    </citation>
    <scope>REVIEW</scope>
</reference>
<reference key="3">
    <citation type="journal article" date="2006" name="Cancer Sci.">
        <title>Molecular functions and biological roles of hepatitis B virus x protein.</title>
        <authorList>
            <person name="Tang H."/>
            <person name="Oishi N."/>
            <person name="Kaneko S."/>
            <person name="Murakami S."/>
        </authorList>
    </citation>
    <scope>REVIEW</scope>
</reference>
<dbReference type="EMBL" id="AB010290">
    <property type="protein sequence ID" value="BAA88279.1"/>
    <property type="molecule type" value="Genomic_DNA"/>
</dbReference>
<dbReference type="EMBL" id="AB010291">
    <property type="protein sequence ID" value="BAA88284.1"/>
    <property type="molecule type" value="Genomic_DNA"/>
</dbReference>
<dbReference type="SMR" id="Q9PX75"/>
<dbReference type="Proteomes" id="UP000007918">
    <property type="component" value="Genome"/>
</dbReference>
<dbReference type="Proteomes" id="UP000119102">
    <property type="component" value="Genome"/>
</dbReference>
<dbReference type="GO" id="GO:0033650">
    <property type="term" value="C:host cell mitochondrion"/>
    <property type="evidence" value="ECO:0007669"/>
    <property type="project" value="UniProtKB-SubCell"/>
</dbReference>
<dbReference type="GO" id="GO:0042025">
    <property type="term" value="C:host cell nucleus"/>
    <property type="evidence" value="ECO:0007669"/>
    <property type="project" value="UniProtKB-SubCell"/>
</dbReference>
<dbReference type="GO" id="GO:0006351">
    <property type="term" value="P:DNA-templated transcription"/>
    <property type="evidence" value="ECO:0007669"/>
    <property type="project" value="UniProtKB-UniRule"/>
</dbReference>
<dbReference type="GO" id="GO:0085033">
    <property type="term" value="P:symbiont-mediated activation of host NF-kappaB cascade"/>
    <property type="evidence" value="ECO:0007669"/>
    <property type="project" value="UniProtKB-UniRule"/>
</dbReference>
<dbReference type="GO" id="GO:0039592">
    <property type="term" value="P:symbiont-mediated arrest of host cell cycle during G2/M transition"/>
    <property type="evidence" value="ECO:0007669"/>
    <property type="project" value="UniProtKB-UniRule"/>
</dbReference>
<dbReference type="GO" id="GO:0019079">
    <property type="term" value="P:viral genome replication"/>
    <property type="evidence" value="ECO:0007669"/>
    <property type="project" value="UniProtKB-UniRule"/>
</dbReference>
<dbReference type="HAMAP" id="MF_04074">
    <property type="entry name" value="HBV_X"/>
    <property type="match status" value="1"/>
</dbReference>
<dbReference type="InterPro" id="IPR000236">
    <property type="entry name" value="Transactivation_prot_X"/>
</dbReference>
<dbReference type="Pfam" id="PF00739">
    <property type="entry name" value="X"/>
    <property type="match status" value="1"/>
</dbReference>
<proteinExistence type="inferred from homology"/>
<name>X_HBVB7</name>
<organismHost>
    <name type="scientific">Homo sapiens</name>
    <name type="common">Human</name>
    <dbReference type="NCBI Taxonomy" id="9606"/>
</organismHost>
<organismHost>
    <name type="scientific">Pan troglodytes</name>
    <name type="common">Chimpanzee</name>
    <dbReference type="NCBI Taxonomy" id="9598"/>
</organismHost>
<comment type="function">
    <text evidence="1">Multifunctional protein that plays a role in silencing host antiviral defenses and promoting viral transcription. Does not seem to be essential for HBV infection. May be directly involved in development of cirrhosis and liver cancer (hepatocellular carcinoma). Most of cytosolic activities involve modulation of cytosolic calcium. The effect on apoptosis is controversial depending on the cell types in which the studies have been conducted. May induce apoptosis by localizing in mitochondria and causing loss of mitochondrial membrane potential. May also modulate apoptosis by binding host CFLAR, a key regulator of the death-inducing signaling complex (DISC). Promotes viral transcription by using the host E3 ubiquitin ligase DDB1 to target the SMC5-SMC6 complex to proteasomal degradation. This host complex would otherwise bind to viral episomal DNA, and prevents its transcription. Moderately stimulates transcription of many different viral and cellular transcription elements. Promoters and enhancers stimulated by HBx contain DNA binding sites for NF-kappa-B, AP-1, AP-2, c-EBP, ATF/CREB, or the calcium-activated factor NF-AT.</text>
</comment>
<comment type="subunit">
    <text evidence="1">May form homodimer. May interact with host CEBPA, CFLAR, CREB1, DDB1, E4F1, HBXIP, HSPD1/HSP60, NFKBIA, POLR2E and SMAD4. Interacts with host SMC5-SMC6 complex and induces its degradation. Interacts with host TRPC4AP; leading to prevent ubiquitination of TRPC4AP. Interacts with host PLSCR1; this interaction promotes ubiquitination and degradation of HBx and impairs HBx-mediated cell proliferation.</text>
</comment>
<comment type="subcellular location">
    <subcellularLocation>
        <location evidence="1">Host cytoplasm</location>
    </subcellularLocation>
    <subcellularLocation>
        <location evidence="1">Host nucleus</location>
    </subcellularLocation>
    <subcellularLocation>
        <location evidence="1">Host mitochondrion</location>
    </subcellularLocation>
    <text evidence="1">Mainly cytoplasmic as only a fraction is detected in the nucleus. In cytoplasm, a minor fraction associates with mitochondria or proteasomes.</text>
</comment>
<comment type="PTM">
    <text evidence="1">A fraction may be phosphorylated in insect cells and HepG2 cells, a human hepatoblastoma cell line. Phosphorylated in vitro by host protein kinase C or mitogen-activated protein kinase. N-acetylated in insect cells.</text>
</comment>
<comment type="similarity">
    <text evidence="1">Belongs to the orthohepadnavirus protein X family.</text>
</comment>
<comment type="caution">
    <text>Transcriptional activities should be taken with a grain of salt. As of 2007, all studies demonstrating in vivo interaction between protein X and transcriptional components were performed with significant overexpression of both proteins and in the absence of viral infection.</text>
</comment>
<evidence type="ECO:0000255" key="1">
    <source>
        <dbReference type="HAMAP-Rule" id="MF_04074"/>
    </source>
</evidence>